<proteinExistence type="evidence at protein level"/>
<organism>
    <name type="scientific">Phlebotomus orientalis</name>
    <name type="common">Phlebotomine sand fly</name>
    <dbReference type="NCBI Taxonomy" id="99786"/>
    <lineage>
        <taxon>Eukaryota</taxon>
        <taxon>Metazoa</taxon>
        <taxon>Ecdysozoa</taxon>
        <taxon>Arthropoda</taxon>
        <taxon>Hexapoda</taxon>
        <taxon>Insecta</taxon>
        <taxon>Pterygota</taxon>
        <taxon>Neoptera</taxon>
        <taxon>Endopterygota</taxon>
        <taxon>Diptera</taxon>
        <taxon>Nematocera</taxon>
        <taxon>Psychodoidea</taxon>
        <taxon>Psychodidae</taxon>
        <taxon>Phlebotomus</taxon>
        <taxon>Larroussius</taxon>
    </lineage>
</organism>
<feature type="signal peptide" evidence="1">
    <location>
        <begin position="1"/>
        <end position="18"/>
    </location>
</feature>
<feature type="chain" id="PRO_5004738099" description="Yellow-related salivary protein ASP2" evidence="1">
    <location>
        <begin position="19"/>
        <end position="387"/>
    </location>
</feature>
<evidence type="ECO:0000255" key="1"/>
<evidence type="ECO:0000269" key="2">
    <source>
    </source>
</evidence>
<evidence type="ECO:0000269" key="3">
    <source>
    </source>
</evidence>
<evidence type="ECO:0000303" key="4">
    <source>
    </source>
</evidence>
<evidence type="ECO:0000305" key="5"/>
<evidence type="ECO:0000312" key="6">
    <source>
        <dbReference type="EMBL" id="AGT96427.1"/>
    </source>
</evidence>
<sequence>MKIFLCLIVVVSLQGVLAYHIEREYAWKNIIYEGINPASYNIENSIPTAFAHDATSKKIFITVPRINPVPITLTEFDTTKHPEGSPSLSKFPGSDKIISVYQPVIDECRRLWIADVGQVEYKEDEKKFPKQNAAIIAYDLTKDNYPEIDRYEIPSIVAGNPLGFGGFAVDVTNPKGGCGKTFIYIANFNDNTLIVYDQEKKDSWKISHGTFKPEHESILTHNGAQHILKLGIFGITLGDLDAEGNRPAYYLGGSSTKLFRVNTKDLKKKDGQIEPTPLGDRGSHSEALALAYDPKTKVIFFTEYNSKRISCWNTQKSLNHDSIDAIYDGPDFIFGTDISVDSDSKLWFFSNGHPPIENLQLTYDKPHIRLISMDTEKSIHGTKCEVK</sequence>
<keyword id="KW-0964">Secreted</keyword>
<keyword id="KW-0732">Signal</keyword>
<accession>V5K5U3</accession>
<dbReference type="EMBL" id="KC170933">
    <property type="protein sequence ID" value="AGT96427.1"/>
    <property type="molecule type" value="mRNA"/>
</dbReference>
<dbReference type="SMR" id="V5K5U3"/>
<dbReference type="GO" id="GO:0005576">
    <property type="term" value="C:extracellular region"/>
    <property type="evidence" value="ECO:0007669"/>
    <property type="project" value="UniProtKB-SubCell"/>
</dbReference>
<dbReference type="Gene3D" id="2.120.10.30">
    <property type="entry name" value="TolB, C-terminal domain"/>
    <property type="match status" value="1"/>
</dbReference>
<dbReference type="InterPro" id="IPR011042">
    <property type="entry name" value="6-blade_b-propeller_TolB-like"/>
</dbReference>
<dbReference type="InterPro" id="IPR017996">
    <property type="entry name" value="Royal_jelly/protein_yellow"/>
</dbReference>
<dbReference type="PANTHER" id="PTHR10009:SF18">
    <property type="entry name" value="PROTEIN YELLOW-LIKE PROTEIN"/>
    <property type="match status" value="1"/>
</dbReference>
<dbReference type="PANTHER" id="PTHR10009">
    <property type="entry name" value="PROTEIN YELLOW-RELATED"/>
    <property type="match status" value="1"/>
</dbReference>
<dbReference type="Pfam" id="PF03022">
    <property type="entry name" value="MRJP"/>
    <property type="match status" value="1"/>
</dbReference>
<dbReference type="PRINTS" id="PR01366">
    <property type="entry name" value="ROYALJELLY"/>
</dbReference>
<dbReference type="SUPFAM" id="SSF75011">
    <property type="entry name" value="3-carboxy-cis,cis-mucoante lactonizing enzyme"/>
    <property type="match status" value="1"/>
</dbReference>
<name>ASP2_PHLOR</name>
<comment type="function">
    <text evidence="3 5">Probably modulates blood feeding of sand flies on vertebrate species by binding and sequestering different mediators involved in the host response (Probable). Binds biogenic amines (PubMed:31604119). Binds octopamine with high affinity (PubMed:31604119). Binds serotonin and dopamine with medium affinity (PubMed:31604119). Poorly binds histamine (PubMed:31604119). Does not bind noradrenaline and adrenaline (PubMed:31604119).</text>
</comment>
<comment type="subcellular location">
    <subcellularLocation>
        <location evidence="5">Secreted</location>
    </subcellularLocation>
</comment>
<comment type="tissue specificity">
    <text evidence="2">Female salivary gland (at protein level).</text>
</comment>
<comment type="similarity">
    <text evidence="5">Belongs to the major royal jelly protein family.</text>
</comment>
<protein>
    <recommendedName>
        <fullName evidence="5">Yellow-related salivary protein ASP2</fullName>
    </recommendedName>
    <alternativeName>
        <fullName evidence="4">PorASP2</fullName>
    </alternativeName>
</protein>
<reference evidence="6" key="1">
    <citation type="journal article" date="2014" name="PLoS Negl. Trop. Dis.">
        <title>Comparative Analysis of Salivary Gland Transcriptomes of Phlebotomus orientalis Sand Flies from Endemic and Non-endemic Foci of Visceral Leishmaniasis.</title>
        <authorList>
            <person name="Vlkova M."/>
            <person name="Sima M."/>
            <person name="Rohousova I."/>
            <person name="Kostalova T."/>
            <person name="Sumova P."/>
            <person name="Volfova V."/>
            <person name="Jaske E.L."/>
            <person name="Barbian K.D."/>
            <person name="Gebre-Michael T."/>
            <person name="Hailu A."/>
            <person name="Warburg A."/>
            <person name="Ribeiro J.M."/>
            <person name="Valenzuela J.G."/>
            <person name="Jochim R.C."/>
            <person name="Volf P."/>
        </authorList>
    </citation>
    <scope>NUCLEOTIDE SEQUENCE [MRNA]</scope>
    <scope>IDENTIFICATION BY MASS SPECTROMETRY</scope>
    <scope>TISSUE SPECIFICITY</scope>
    <source>
        <strain evidence="6">Addis Zemen</strain>
        <tissue evidence="6">Salivary gland</tissue>
    </source>
</reference>
<reference evidence="5" key="2">
    <citation type="journal article" date="2019" name="Insect Biochem. Mol. Biol.">
        <title>Amine-binding properties of salivary yellow-related proteins in phlebotomine sand flies.</title>
        <authorList>
            <person name="Sumova P."/>
            <person name="Sima M."/>
            <person name="Kalouskova B."/>
            <person name="Polanska N."/>
            <person name="Vanek O."/>
            <person name="Oliveira F."/>
            <person name="Valenzuela J.G."/>
            <person name="Volf P."/>
        </authorList>
    </citation>
    <scope>FUNCTION</scope>
</reference>